<accession>Q1RCM7</accession>
<keyword id="KW-0963">Cytoplasm</keyword>
<keyword id="KW-0488">Methylation</keyword>
<keyword id="KW-0648">Protein biosynthesis</keyword>
<organism>
    <name type="scientific">Escherichia coli (strain UTI89 / UPEC)</name>
    <dbReference type="NCBI Taxonomy" id="364106"/>
    <lineage>
        <taxon>Bacteria</taxon>
        <taxon>Pseudomonadati</taxon>
        <taxon>Pseudomonadota</taxon>
        <taxon>Gammaproteobacteria</taxon>
        <taxon>Enterobacterales</taxon>
        <taxon>Enterobacteriaceae</taxon>
        <taxon>Escherichia</taxon>
    </lineage>
</organism>
<feature type="chain" id="PRO_0000263273" description="Peptide chain release factor 1">
    <location>
        <begin position="1"/>
        <end position="360"/>
    </location>
</feature>
<feature type="region of interest" description="Disordered" evidence="2">
    <location>
        <begin position="284"/>
        <end position="313"/>
    </location>
</feature>
<feature type="modified residue" description="N5-methylglutamine" evidence="1">
    <location>
        <position position="235"/>
    </location>
</feature>
<dbReference type="EMBL" id="CP000243">
    <property type="protein sequence ID" value="ABE06887.1"/>
    <property type="molecule type" value="Genomic_DNA"/>
</dbReference>
<dbReference type="RefSeq" id="WP_000804726.1">
    <property type="nucleotide sequence ID" value="NZ_CP064825.1"/>
</dbReference>
<dbReference type="SMR" id="Q1RCM7"/>
<dbReference type="GeneID" id="93775276"/>
<dbReference type="KEGG" id="eci:UTI89_C1405"/>
<dbReference type="HOGENOM" id="CLU_036856_0_1_6"/>
<dbReference type="Proteomes" id="UP000001952">
    <property type="component" value="Chromosome"/>
</dbReference>
<dbReference type="GO" id="GO:0005737">
    <property type="term" value="C:cytoplasm"/>
    <property type="evidence" value="ECO:0007669"/>
    <property type="project" value="UniProtKB-SubCell"/>
</dbReference>
<dbReference type="GO" id="GO:0016149">
    <property type="term" value="F:translation release factor activity, codon specific"/>
    <property type="evidence" value="ECO:0007669"/>
    <property type="project" value="UniProtKB-UniRule"/>
</dbReference>
<dbReference type="FunFam" id="3.30.160.20:FF:000004">
    <property type="entry name" value="Peptide chain release factor 1"/>
    <property type="match status" value="1"/>
</dbReference>
<dbReference type="FunFam" id="3.30.70.1660:FF:000002">
    <property type="entry name" value="Peptide chain release factor 1"/>
    <property type="match status" value="1"/>
</dbReference>
<dbReference type="FunFam" id="3.30.70.1660:FF:000004">
    <property type="entry name" value="Peptide chain release factor 1"/>
    <property type="match status" value="1"/>
</dbReference>
<dbReference type="Gene3D" id="3.30.160.20">
    <property type="match status" value="1"/>
</dbReference>
<dbReference type="Gene3D" id="3.30.70.1660">
    <property type="match status" value="1"/>
</dbReference>
<dbReference type="Gene3D" id="6.10.140.1950">
    <property type="match status" value="1"/>
</dbReference>
<dbReference type="HAMAP" id="MF_00093">
    <property type="entry name" value="Rel_fac_1"/>
    <property type="match status" value="1"/>
</dbReference>
<dbReference type="InterPro" id="IPR005139">
    <property type="entry name" value="PCRF"/>
</dbReference>
<dbReference type="InterPro" id="IPR000352">
    <property type="entry name" value="Pep_chain_release_fac_I"/>
</dbReference>
<dbReference type="InterPro" id="IPR045853">
    <property type="entry name" value="Pep_chain_release_fac_I_sf"/>
</dbReference>
<dbReference type="InterPro" id="IPR050057">
    <property type="entry name" value="Prokaryotic/Mito_RF"/>
</dbReference>
<dbReference type="InterPro" id="IPR004373">
    <property type="entry name" value="RF-1"/>
</dbReference>
<dbReference type="NCBIfam" id="TIGR00019">
    <property type="entry name" value="prfA"/>
    <property type="match status" value="1"/>
</dbReference>
<dbReference type="NCBIfam" id="NF001859">
    <property type="entry name" value="PRK00591.1"/>
    <property type="match status" value="1"/>
</dbReference>
<dbReference type="PANTHER" id="PTHR43804">
    <property type="entry name" value="LD18447P"/>
    <property type="match status" value="1"/>
</dbReference>
<dbReference type="PANTHER" id="PTHR43804:SF7">
    <property type="entry name" value="LD18447P"/>
    <property type="match status" value="1"/>
</dbReference>
<dbReference type="Pfam" id="PF03462">
    <property type="entry name" value="PCRF"/>
    <property type="match status" value="1"/>
</dbReference>
<dbReference type="Pfam" id="PF00472">
    <property type="entry name" value="RF-1"/>
    <property type="match status" value="1"/>
</dbReference>
<dbReference type="SMART" id="SM00937">
    <property type="entry name" value="PCRF"/>
    <property type="match status" value="1"/>
</dbReference>
<dbReference type="SUPFAM" id="SSF75620">
    <property type="entry name" value="Release factor"/>
    <property type="match status" value="1"/>
</dbReference>
<dbReference type="PROSITE" id="PS00745">
    <property type="entry name" value="RF_PROK_I"/>
    <property type="match status" value="1"/>
</dbReference>
<sequence>MKPSIVAKLEALHERHEEVQALLGDAQTIADQERFRALSREYAQLSDVSRCFTDWQQVQEDIETAQMMLDDPEMREMAQDELREAKEKSEQLEQQLQVLLLPKDPDDERNAFLEVRAGTGGDEAALFAGDLFRMYSRYAEARRWRVEIMSASEGEHGGYKEIIAKISGDGVYGRLKFESGGHRVQRVPATESQGRIHTSACTVAVMPELPDAELPDINPADLRIDTFRSSGAGGQHVNTTDSAIRITHLPTGIVVECQDERSQHKNKAKALSVLGARIHAAEMAKRQQAEASTRRNLLGSGDRSDRNRTYNFPQGRVTDHRINLTLYRLDEVMEGKLDMLIEPIIQEHQADQLAALSEQE</sequence>
<gene>
    <name evidence="1" type="primary">prfA</name>
    <name type="ordered locus">UTI89_C1405</name>
</gene>
<comment type="function">
    <text evidence="1">Peptide chain release factor 1 directs the termination of translation in response to the peptide chain termination codons UAG and UAA.</text>
</comment>
<comment type="subcellular location">
    <subcellularLocation>
        <location evidence="1">Cytoplasm</location>
    </subcellularLocation>
</comment>
<comment type="PTM">
    <text evidence="1">Methylated by PrmC. Methylation increases the termination efficiency of RF1.</text>
</comment>
<comment type="similarity">
    <text evidence="1">Belongs to the prokaryotic/mitochondrial release factor family.</text>
</comment>
<protein>
    <recommendedName>
        <fullName evidence="1">Peptide chain release factor 1</fullName>
        <shortName evidence="1">RF-1</shortName>
    </recommendedName>
</protein>
<evidence type="ECO:0000255" key="1">
    <source>
        <dbReference type="HAMAP-Rule" id="MF_00093"/>
    </source>
</evidence>
<evidence type="ECO:0000256" key="2">
    <source>
        <dbReference type="SAM" id="MobiDB-lite"/>
    </source>
</evidence>
<reference key="1">
    <citation type="journal article" date="2006" name="Proc. Natl. Acad. Sci. U.S.A.">
        <title>Identification of genes subject to positive selection in uropathogenic strains of Escherichia coli: a comparative genomics approach.</title>
        <authorList>
            <person name="Chen S.L."/>
            <person name="Hung C.-S."/>
            <person name="Xu J."/>
            <person name="Reigstad C.S."/>
            <person name="Magrini V."/>
            <person name="Sabo A."/>
            <person name="Blasiar D."/>
            <person name="Bieri T."/>
            <person name="Meyer R.R."/>
            <person name="Ozersky P."/>
            <person name="Armstrong J.R."/>
            <person name="Fulton R.S."/>
            <person name="Latreille J.P."/>
            <person name="Spieth J."/>
            <person name="Hooton T.M."/>
            <person name="Mardis E.R."/>
            <person name="Hultgren S.J."/>
            <person name="Gordon J.I."/>
        </authorList>
    </citation>
    <scope>NUCLEOTIDE SEQUENCE [LARGE SCALE GENOMIC DNA]</scope>
    <source>
        <strain>UTI89 / UPEC</strain>
    </source>
</reference>
<name>RF1_ECOUT</name>
<proteinExistence type="inferred from homology"/>